<comment type="function">
    <text evidence="1">Has an important function as a repair enzyme for proteins that have been inactivated by oxidation. Catalyzes the reversible oxidation-reduction of methionine sulfoxide in proteins to methionine.</text>
</comment>
<comment type="catalytic activity">
    <reaction evidence="1">
        <text>L-methionyl-[protein] + [thioredoxin]-disulfide + H2O = L-methionyl-(S)-S-oxide-[protein] + [thioredoxin]-dithiol</text>
        <dbReference type="Rhea" id="RHEA:14217"/>
        <dbReference type="Rhea" id="RHEA-COMP:10698"/>
        <dbReference type="Rhea" id="RHEA-COMP:10700"/>
        <dbReference type="Rhea" id="RHEA-COMP:12313"/>
        <dbReference type="Rhea" id="RHEA-COMP:12315"/>
        <dbReference type="ChEBI" id="CHEBI:15377"/>
        <dbReference type="ChEBI" id="CHEBI:16044"/>
        <dbReference type="ChEBI" id="CHEBI:29950"/>
        <dbReference type="ChEBI" id="CHEBI:44120"/>
        <dbReference type="ChEBI" id="CHEBI:50058"/>
        <dbReference type="EC" id="1.8.4.11"/>
    </reaction>
</comment>
<comment type="catalytic activity">
    <reaction evidence="1">
        <text>[thioredoxin]-disulfide + L-methionine + H2O = L-methionine (S)-S-oxide + [thioredoxin]-dithiol</text>
        <dbReference type="Rhea" id="RHEA:19993"/>
        <dbReference type="Rhea" id="RHEA-COMP:10698"/>
        <dbReference type="Rhea" id="RHEA-COMP:10700"/>
        <dbReference type="ChEBI" id="CHEBI:15377"/>
        <dbReference type="ChEBI" id="CHEBI:29950"/>
        <dbReference type="ChEBI" id="CHEBI:50058"/>
        <dbReference type="ChEBI" id="CHEBI:57844"/>
        <dbReference type="ChEBI" id="CHEBI:58772"/>
        <dbReference type="EC" id="1.8.4.11"/>
    </reaction>
</comment>
<comment type="similarity">
    <text evidence="1">Belongs to the MsrA Met sulfoxide reductase family.</text>
</comment>
<accession>Q1I3L0</accession>
<evidence type="ECO:0000255" key="1">
    <source>
        <dbReference type="HAMAP-Rule" id="MF_01401"/>
    </source>
</evidence>
<reference key="1">
    <citation type="journal article" date="2006" name="Nat. Biotechnol.">
        <title>Complete genome sequence of the entomopathogenic and metabolically versatile soil bacterium Pseudomonas entomophila.</title>
        <authorList>
            <person name="Vodovar N."/>
            <person name="Vallenet D."/>
            <person name="Cruveiller S."/>
            <person name="Rouy Z."/>
            <person name="Barbe V."/>
            <person name="Acosta C."/>
            <person name="Cattolico L."/>
            <person name="Jubin C."/>
            <person name="Lajus A."/>
            <person name="Segurens B."/>
            <person name="Vacherie B."/>
            <person name="Wincker P."/>
            <person name="Weissenbach J."/>
            <person name="Lemaitre B."/>
            <person name="Medigue C."/>
            <person name="Boccard F."/>
        </authorList>
    </citation>
    <scope>NUCLEOTIDE SEQUENCE [LARGE SCALE GENOMIC DNA]</scope>
    <source>
        <strain>L48</strain>
    </source>
</reference>
<keyword id="KW-0560">Oxidoreductase</keyword>
<feature type="chain" id="PRO_1000068351" description="Peptide methionine sulfoxide reductase MsrA">
    <location>
        <begin position="1"/>
        <end position="222"/>
    </location>
</feature>
<feature type="active site" evidence="1">
    <location>
        <position position="60"/>
    </location>
</feature>
<gene>
    <name evidence="1" type="primary">msrA</name>
    <name type="ordered locus">PSEEN5148</name>
</gene>
<dbReference type="EC" id="1.8.4.11" evidence="1"/>
<dbReference type="EMBL" id="CT573326">
    <property type="protein sequence ID" value="CAK17776.1"/>
    <property type="molecule type" value="Genomic_DNA"/>
</dbReference>
<dbReference type="RefSeq" id="WP_011536135.1">
    <property type="nucleotide sequence ID" value="NC_008027.1"/>
</dbReference>
<dbReference type="SMR" id="Q1I3L0"/>
<dbReference type="STRING" id="384676.PSEEN5148"/>
<dbReference type="GeneID" id="32808079"/>
<dbReference type="KEGG" id="pen:PSEEN5148"/>
<dbReference type="eggNOG" id="COG0225">
    <property type="taxonomic scope" value="Bacteria"/>
</dbReference>
<dbReference type="HOGENOM" id="CLU_031040_10_3_6"/>
<dbReference type="OrthoDB" id="4174719at2"/>
<dbReference type="Proteomes" id="UP000000658">
    <property type="component" value="Chromosome"/>
</dbReference>
<dbReference type="GO" id="GO:0005737">
    <property type="term" value="C:cytoplasm"/>
    <property type="evidence" value="ECO:0007669"/>
    <property type="project" value="TreeGrafter"/>
</dbReference>
<dbReference type="GO" id="GO:0036456">
    <property type="term" value="F:L-methionine-(S)-S-oxide reductase activity"/>
    <property type="evidence" value="ECO:0007669"/>
    <property type="project" value="TreeGrafter"/>
</dbReference>
<dbReference type="GO" id="GO:0008113">
    <property type="term" value="F:peptide-methionine (S)-S-oxide reductase activity"/>
    <property type="evidence" value="ECO:0007669"/>
    <property type="project" value="UniProtKB-UniRule"/>
</dbReference>
<dbReference type="GO" id="GO:0034599">
    <property type="term" value="P:cellular response to oxidative stress"/>
    <property type="evidence" value="ECO:0007669"/>
    <property type="project" value="TreeGrafter"/>
</dbReference>
<dbReference type="GO" id="GO:0036211">
    <property type="term" value="P:protein modification process"/>
    <property type="evidence" value="ECO:0007669"/>
    <property type="project" value="UniProtKB-UniRule"/>
</dbReference>
<dbReference type="FunFam" id="3.30.1060.10:FF:000001">
    <property type="entry name" value="Peptide methionine sulfoxide reductase MsrA"/>
    <property type="match status" value="1"/>
</dbReference>
<dbReference type="Gene3D" id="3.30.1060.10">
    <property type="entry name" value="Peptide methionine sulphoxide reductase MsrA"/>
    <property type="match status" value="1"/>
</dbReference>
<dbReference type="HAMAP" id="MF_01401">
    <property type="entry name" value="MsrA"/>
    <property type="match status" value="1"/>
</dbReference>
<dbReference type="InterPro" id="IPR002569">
    <property type="entry name" value="Met_Sox_Rdtase_MsrA_dom"/>
</dbReference>
<dbReference type="InterPro" id="IPR036509">
    <property type="entry name" value="Met_Sox_Rdtase_MsrA_sf"/>
</dbReference>
<dbReference type="InterPro" id="IPR050162">
    <property type="entry name" value="MsrA_MetSO_reductase"/>
</dbReference>
<dbReference type="NCBIfam" id="TIGR00401">
    <property type="entry name" value="msrA"/>
    <property type="match status" value="1"/>
</dbReference>
<dbReference type="PANTHER" id="PTHR42799">
    <property type="entry name" value="MITOCHONDRIAL PEPTIDE METHIONINE SULFOXIDE REDUCTASE"/>
    <property type="match status" value="1"/>
</dbReference>
<dbReference type="PANTHER" id="PTHR42799:SF2">
    <property type="entry name" value="MITOCHONDRIAL PEPTIDE METHIONINE SULFOXIDE REDUCTASE"/>
    <property type="match status" value="1"/>
</dbReference>
<dbReference type="Pfam" id="PF01625">
    <property type="entry name" value="PMSR"/>
    <property type="match status" value="1"/>
</dbReference>
<dbReference type="SUPFAM" id="SSF55068">
    <property type="entry name" value="Peptide methionine sulfoxide reductase"/>
    <property type="match status" value="1"/>
</dbReference>
<name>MSRA_PSEE4</name>
<organism>
    <name type="scientific">Pseudomonas entomophila (strain L48)</name>
    <dbReference type="NCBI Taxonomy" id="384676"/>
    <lineage>
        <taxon>Bacteria</taxon>
        <taxon>Pseudomonadati</taxon>
        <taxon>Pseudomonadota</taxon>
        <taxon>Gammaproteobacteria</taxon>
        <taxon>Pseudomonadales</taxon>
        <taxon>Pseudomonadaceae</taxon>
        <taxon>Pseudomonas</taxon>
    </lineage>
</organism>
<protein>
    <recommendedName>
        <fullName evidence="1">Peptide methionine sulfoxide reductase MsrA</fullName>
        <shortName evidence="1">Protein-methionine-S-oxide reductase</shortName>
        <ecNumber evidence="1">1.8.4.11</ecNumber>
    </recommendedName>
    <alternativeName>
        <fullName evidence="1">Peptide-methionine (S)-S-oxide reductase</fullName>
        <shortName evidence="1">Peptide Met(O) reductase</shortName>
    </alternativeName>
</protein>
<sequence>MVLRSEILVNKNVLPTAEQALPGRETPMALPEFHYVFEGTPLLGPFFEGDIDFAIFALGCFWGAERRFWQREGVVSTVVGYAGGFTPNPTYEEVCSGLTGHTEVVLVVFDKNKVSYHDLLTMFWELHNPTQGMRQGNDVGTQYRSAIYCTSPQQLEEAKTSRDAFQAELSKAGFGEITTEIAQAPTVYFAEAYHQQYLAKNPDGYCGIGGTGVCLPPSLQGN</sequence>
<proteinExistence type="inferred from homology"/>